<protein>
    <recommendedName>
        <fullName>Beta-lactamase OXA-15</fullName>
        <ecNumber evidence="3">3.5.2.6</ecNumber>
    </recommendedName>
</protein>
<dbReference type="EC" id="3.5.2.6" evidence="3"/>
<dbReference type="EMBL" id="U63835">
    <property type="protein sequence ID" value="AAB05874.1"/>
    <property type="molecule type" value="Genomic_DNA"/>
</dbReference>
<dbReference type="RefSeq" id="WP_063861048.1">
    <property type="nucleotide sequence ID" value="NG_049448.1"/>
</dbReference>
<dbReference type="SMR" id="Q51574"/>
<dbReference type="CARD" id="ARO:3001410">
    <property type="molecule name" value="OXA-15"/>
    <property type="mechanism identifier" value="ARO:0001004"/>
    <property type="mechanism name" value="antibiotic inactivation"/>
</dbReference>
<dbReference type="KEGG" id="ag:AAB05874"/>
<dbReference type="GO" id="GO:0008800">
    <property type="term" value="F:beta-lactamase activity"/>
    <property type="evidence" value="ECO:0007669"/>
    <property type="project" value="UniProtKB-EC"/>
</dbReference>
<dbReference type="GO" id="GO:0008658">
    <property type="term" value="F:penicillin binding"/>
    <property type="evidence" value="ECO:0007669"/>
    <property type="project" value="InterPro"/>
</dbReference>
<dbReference type="GO" id="GO:0017001">
    <property type="term" value="P:antibiotic catabolic process"/>
    <property type="evidence" value="ECO:0007669"/>
    <property type="project" value="InterPro"/>
</dbReference>
<dbReference type="GO" id="GO:0046677">
    <property type="term" value="P:response to antibiotic"/>
    <property type="evidence" value="ECO:0007669"/>
    <property type="project" value="UniProtKB-KW"/>
</dbReference>
<dbReference type="Gene3D" id="3.40.710.10">
    <property type="entry name" value="DD-peptidase/beta-lactamase superfamily"/>
    <property type="match status" value="1"/>
</dbReference>
<dbReference type="InterPro" id="IPR012338">
    <property type="entry name" value="Beta-lactam/transpept-like"/>
</dbReference>
<dbReference type="InterPro" id="IPR002137">
    <property type="entry name" value="Beta-lactam_class-D_AS"/>
</dbReference>
<dbReference type="InterPro" id="IPR001460">
    <property type="entry name" value="PCN-bd_Tpept"/>
</dbReference>
<dbReference type="NCBIfam" id="NF012161">
    <property type="entry name" value="bla_class_D_main"/>
    <property type="match status" value="1"/>
</dbReference>
<dbReference type="NCBIfam" id="NF000267">
    <property type="entry name" value="blaOXA-2_like"/>
    <property type="match status" value="1"/>
</dbReference>
<dbReference type="Pfam" id="PF00905">
    <property type="entry name" value="Transpeptidase"/>
    <property type="match status" value="1"/>
</dbReference>
<dbReference type="SUPFAM" id="SSF56601">
    <property type="entry name" value="beta-lactamase/transpeptidase-like"/>
    <property type="match status" value="1"/>
</dbReference>
<dbReference type="PROSITE" id="PS00337">
    <property type="entry name" value="BETA_LACTAMASE_D"/>
    <property type="match status" value="1"/>
</dbReference>
<name>BLO15_PSEAI</name>
<sequence length="275" mass="31628">MAIRIFAILFSIFSLATFAHAQEGTLERSDWRKFFSEFQAKGTIVVADERQADRAMLVFDPVRSKKRYSPASTFKIPHTLFALDAGAVRDEFQIFRWDGVNRGFAGHNQDQDLRSAMRNSTVWVYELFAKEIGDDKARRYLKKIDYGNAGPSTSNGDYWIEGSLAISAQEQIAFLRKLYRNELPFRVEHQRLVKDLMIVEAGRNWILRAKTGWEGRMGWWVGWVEWPTGSVFFALNIDTPNRMDDLFKREAIVRAILRSIEALPPNPAVNSDAAR</sequence>
<keyword id="KW-0046">Antibiotic resistance</keyword>
<keyword id="KW-0378">Hydrolase</keyword>
<keyword id="KW-0614">Plasmid</keyword>
<keyword id="KW-0732">Signal</keyword>
<gene>
    <name type="primary">bla</name>
    <name type="synonym">oxa15</name>
</gene>
<organism>
    <name type="scientific">Pseudomonas aeruginosa</name>
    <dbReference type="NCBI Taxonomy" id="287"/>
    <lineage>
        <taxon>Bacteria</taxon>
        <taxon>Pseudomonadati</taxon>
        <taxon>Pseudomonadota</taxon>
        <taxon>Gammaproteobacteria</taxon>
        <taxon>Pseudomonadales</taxon>
        <taxon>Pseudomonadaceae</taxon>
        <taxon>Pseudomonas</taxon>
    </lineage>
</organism>
<comment type="function">
    <text evidence="3">Hydrolyzes oxacillin, first-generation cephalosporins and ceftazidime. Does not hydrolyze cefotaxime or carbapenems.</text>
</comment>
<comment type="catalytic activity">
    <reaction evidence="3">
        <text>a beta-lactam + H2O = a substituted beta-amino acid</text>
        <dbReference type="Rhea" id="RHEA:20401"/>
        <dbReference type="ChEBI" id="CHEBI:15377"/>
        <dbReference type="ChEBI" id="CHEBI:35627"/>
        <dbReference type="ChEBI" id="CHEBI:140347"/>
        <dbReference type="EC" id="3.5.2.6"/>
    </reaction>
</comment>
<comment type="similarity">
    <text evidence="4">Belongs to the class-D beta-lactamase family.</text>
</comment>
<proteinExistence type="evidence at protein level"/>
<evidence type="ECO:0000250" key="1"/>
<evidence type="ECO:0000255" key="2">
    <source>
        <dbReference type="PROSITE-ProRule" id="PRU10103"/>
    </source>
</evidence>
<evidence type="ECO:0000269" key="3">
    <source>
    </source>
</evidence>
<evidence type="ECO:0000305" key="4"/>
<accession>Q51574</accession>
<reference key="1">
    <citation type="journal article" date="1997" name="Antimicrob. Agents Chemother.">
        <title>OXA-15, an extended-spectrum variant of OXA-2 beta-lactamase, isolated from a Pseudomonas aeruginosa strain.</title>
        <authorList>
            <person name="Danel F."/>
            <person name="Hall L.M.C."/>
            <person name="Gur D."/>
            <person name="Livermore D.M."/>
        </authorList>
    </citation>
    <scope>NUCLEOTIDE SEQUENCE [GENOMIC DNA]</scope>
    <scope>FUNCTION</scope>
    <scope>CATALYTIC ACTIVITY</scope>
    <source>
        <strain>AH</strain>
    </source>
</reference>
<feature type="signal peptide" evidence="1">
    <location>
        <begin position="1"/>
        <end position="21"/>
    </location>
</feature>
<feature type="chain" id="PRO_0000017032" description="Beta-lactamase OXA-15">
    <location>
        <begin position="22"/>
        <end position="275"/>
    </location>
</feature>
<feature type="active site" description="Acyl-ester intermediate" evidence="2">
    <location>
        <position position="72"/>
    </location>
</feature>
<feature type="binding site" evidence="1">
    <location>
        <begin position="210"/>
        <end position="212"/>
    </location>
    <ligand>
        <name>substrate</name>
    </ligand>
</feature>
<feature type="modified residue" description="N6-carboxylysine" evidence="1">
    <location>
        <position position="75"/>
    </location>
</feature>
<geneLocation type="plasmid">
    <name>pMLH54</name>
</geneLocation>